<feature type="chain" id="PRO_0000201183" description="Acyl-CoA dehydrogenase">
    <location>
        <begin position="1"/>
        <end position="379"/>
    </location>
</feature>
<feature type="sequence conflict" description="In Ref. 1; AAB09615." evidence="3" ref="1">
    <original>L</original>
    <variation>M</variation>
    <location>
        <position position="97"/>
    </location>
</feature>
<feature type="sequence conflict" description="In Ref. 1; AAB09615." evidence="3" ref="1">
    <original>A</original>
    <variation>D</variation>
    <location>
        <position position="171"/>
    </location>
</feature>
<feature type="sequence conflict" description="In Ref. 2; BAA12589." evidence="3" ref="2">
    <location>
        <position position="329"/>
    </location>
</feature>
<feature type="helix" evidence="4">
    <location>
        <begin position="7"/>
        <end position="32"/>
    </location>
</feature>
<feature type="helix" evidence="4">
    <location>
        <begin position="37"/>
        <end position="45"/>
    </location>
</feature>
<feature type="turn" evidence="4">
    <location>
        <begin position="49"/>
        <end position="52"/>
    </location>
</feature>
<feature type="helix" evidence="4">
    <location>
        <begin position="55"/>
        <end position="57"/>
    </location>
</feature>
<feature type="helix" evidence="4">
    <location>
        <begin position="65"/>
        <end position="77"/>
    </location>
</feature>
<feature type="helix" evidence="4">
    <location>
        <begin position="79"/>
        <end position="90"/>
    </location>
</feature>
<feature type="turn" evidence="4">
    <location>
        <begin position="91"/>
        <end position="93"/>
    </location>
</feature>
<feature type="helix" evidence="4">
    <location>
        <begin position="94"/>
        <end position="99"/>
    </location>
</feature>
<feature type="helix" evidence="4">
    <location>
        <begin position="102"/>
        <end position="114"/>
    </location>
</feature>
<feature type="strand" evidence="4">
    <location>
        <begin position="115"/>
        <end position="117"/>
    </location>
</feature>
<feature type="strand" evidence="4">
    <location>
        <begin position="119"/>
        <end position="122"/>
    </location>
</feature>
<feature type="strand" evidence="4">
    <location>
        <begin position="128"/>
        <end position="131"/>
    </location>
</feature>
<feature type="helix" evidence="4">
    <location>
        <begin position="132"/>
        <end position="134"/>
    </location>
</feature>
<feature type="strand" evidence="4">
    <location>
        <begin position="138"/>
        <end position="141"/>
    </location>
</feature>
<feature type="strand" evidence="4">
    <location>
        <begin position="145"/>
        <end position="156"/>
    </location>
</feature>
<feature type="turn" evidence="4">
    <location>
        <begin position="157"/>
        <end position="160"/>
    </location>
</feature>
<feature type="strand" evidence="4">
    <location>
        <begin position="162"/>
        <end position="171"/>
    </location>
</feature>
<feature type="strand" evidence="4">
    <location>
        <begin position="178"/>
        <end position="185"/>
    </location>
</feature>
<feature type="strand" evidence="4">
    <location>
        <begin position="191"/>
        <end position="196"/>
    </location>
</feature>
<feature type="strand" evidence="4">
    <location>
        <begin position="199"/>
        <end position="201"/>
    </location>
</feature>
<feature type="strand" evidence="4">
    <location>
        <begin position="207"/>
        <end position="218"/>
    </location>
</feature>
<feature type="helix" evidence="4">
    <location>
        <begin position="219"/>
        <end position="221"/>
    </location>
</feature>
<feature type="strand" evidence="4">
    <location>
        <begin position="222"/>
        <end position="225"/>
    </location>
</feature>
<feature type="helix" evidence="4">
    <location>
        <begin position="229"/>
        <end position="265"/>
    </location>
</feature>
<feature type="helix" evidence="4">
    <location>
        <begin position="273"/>
        <end position="275"/>
    </location>
</feature>
<feature type="helix" evidence="4">
    <location>
        <begin position="277"/>
        <end position="304"/>
    </location>
</feature>
<feature type="helix" evidence="4">
    <location>
        <begin position="311"/>
        <end position="326"/>
    </location>
</feature>
<feature type="turn" evidence="4">
    <location>
        <begin position="334"/>
        <end position="336"/>
    </location>
</feature>
<feature type="helix" evidence="4">
    <location>
        <begin position="337"/>
        <end position="341"/>
    </location>
</feature>
<feature type="helix" evidence="4">
    <location>
        <begin position="348"/>
        <end position="356"/>
    </location>
</feature>
<feature type="turn" evidence="4">
    <location>
        <begin position="357"/>
        <end position="359"/>
    </location>
</feature>
<feature type="strand" evidence="4">
    <location>
        <begin position="360"/>
        <end position="362"/>
    </location>
</feature>
<feature type="helix" evidence="4">
    <location>
        <begin position="364"/>
        <end position="376"/>
    </location>
</feature>
<reference key="1">
    <citation type="journal article" date="1996" name="J. Bacteriol.">
        <title>A sigma E dependent operon subject to catabolite repression during sporulation in Bacillus subtilis.</title>
        <authorList>
            <person name="Bryan E.M."/>
            <person name="Beall B.W."/>
            <person name="Moran C.P. Jr."/>
        </authorList>
    </citation>
    <scope>NUCLEOTIDE SEQUENCE [GENOMIC DNA]</scope>
    <scope>DEVELOPMENTAL STAGE</scope>
    <scope>INDUCTION</scope>
    <source>
        <strain>168 / MB24</strain>
    </source>
</reference>
<reference key="2">
    <citation type="journal article" date="1996" name="Microbiology">
        <title>Systematic sequencing of the 283 kb 210 degrees-232 degrees region of the Bacillus subtilis genome containing the skin element and many sporulation genes.</title>
        <authorList>
            <person name="Mizuno M."/>
            <person name="Masuda S."/>
            <person name="Takemaru K."/>
            <person name="Hosono S."/>
            <person name="Sato T."/>
            <person name="Takeuchi M."/>
            <person name="Kobayashi Y."/>
        </authorList>
    </citation>
    <scope>NUCLEOTIDE SEQUENCE [GENOMIC DNA]</scope>
    <source>
        <strain>168 / JH642</strain>
    </source>
</reference>
<reference key="3">
    <citation type="journal article" date="1997" name="Nature">
        <title>The complete genome sequence of the Gram-positive bacterium Bacillus subtilis.</title>
        <authorList>
            <person name="Kunst F."/>
            <person name="Ogasawara N."/>
            <person name="Moszer I."/>
            <person name="Albertini A.M."/>
            <person name="Alloni G."/>
            <person name="Azevedo V."/>
            <person name="Bertero M.G."/>
            <person name="Bessieres P."/>
            <person name="Bolotin A."/>
            <person name="Borchert S."/>
            <person name="Borriss R."/>
            <person name="Boursier L."/>
            <person name="Brans A."/>
            <person name="Braun M."/>
            <person name="Brignell S.C."/>
            <person name="Bron S."/>
            <person name="Brouillet S."/>
            <person name="Bruschi C.V."/>
            <person name="Caldwell B."/>
            <person name="Capuano V."/>
            <person name="Carter N.M."/>
            <person name="Choi S.-K."/>
            <person name="Codani J.-J."/>
            <person name="Connerton I.F."/>
            <person name="Cummings N.J."/>
            <person name="Daniel R.A."/>
            <person name="Denizot F."/>
            <person name="Devine K.M."/>
            <person name="Duesterhoeft A."/>
            <person name="Ehrlich S.D."/>
            <person name="Emmerson P.T."/>
            <person name="Entian K.-D."/>
            <person name="Errington J."/>
            <person name="Fabret C."/>
            <person name="Ferrari E."/>
            <person name="Foulger D."/>
            <person name="Fritz C."/>
            <person name="Fujita M."/>
            <person name="Fujita Y."/>
            <person name="Fuma S."/>
            <person name="Galizzi A."/>
            <person name="Galleron N."/>
            <person name="Ghim S.-Y."/>
            <person name="Glaser P."/>
            <person name="Goffeau A."/>
            <person name="Golightly E.J."/>
            <person name="Grandi G."/>
            <person name="Guiseppi G."/>
            <person name="Guy B.J."/>
            <person name="Haga K."/>
            <person name="Haiech J."/>
            <person name="Harwood C.R."/>
            <person name="Henaut A."/>
            <person name="Hilbert H."/>
            <person name="Holsappel S."/>
            <person name="Hosono S."/>
            <person name="Hullo M.-F."/>
            <person name="Itaya M."/>
            <person name="Jones L.-M."/>
            <person name="Joris B."/>
            <person name="Karamata D."/>
            <person name="Kasahara Y."/>
            <person name="Klaerr-Blanchard M."/>
            <person name="Klein C."/>
            <person name="Kobayashi Y."/>
            <person name="Koetter P."/>
            <person name="Koningstein G."/>
            <person name="Krogh S."/>
            <person name="Kumano M."/>
            <person name="Kurita K."/>
            <person name="Lapidus A."/>
            <person name="Lardinois S."/>
            <person name="Lauber J."/>
            <person name="Lazarevic V."/>
            <person name="Lee S.-M."/>
            <person name="Levine A."/>
            <person name="Liu H."/>
            <person name="Masuda S."/>
            <person name="Mauel C."/>
            <person name="Medigue C."/>
            <person name="Medina N."/>
            <person name="Mellado R.P."/>
            <person name="Mizuno M."/>
            <person name="Moestl D."/>
            <person name="Nakai S."/>
            <person name="Noback M."/>
            <person name="Noone D."/>
            <person name="O'Reilly M."/>
            <person name="Ogawa K."/>
            <person name="Ogiwara A."/>
            <person name="Oudega B."/>
            <person name="Park S.-H."/>
            <person name="Parro V."/>
            <person name="Pohl T.M."/>
            <person name="Portetelle D."/>
            <person name="Porwollik S."/>
            <person name="Prescott A.M."/>
            <person name="Presecan E."/>
            <person name="Pujic P."/>
            <person name="Purnelle B."/>
            <person name="Rapoport G."/>
            <person name="Rey M."/>
            <person name="Reynolds S."/>
            <person name="Rieger M."/>
            <person name="Rivolta C."/>
            <person name="Rocha E."/>
            <person name="Roche B."/>
            <person name="Rose M."/>
            <person name="Sadaie Y."/>
            <person name="Sato T."/>
            <person name="Scanlan E."/>
            <person name="Schleich S."/>
            <person name="Schroeter R."/>
            <person name="Scoffone F."/>
            <person name="Sekiguchi J."/>
            <person name="Sekowska A."/>
            <person name="Seror S.J."/>
            <person name="Serror P."/>
            <person name="Shin B.-S."/>
            <person name="Soldo B."/>
            <person name="Sorokin A."/>
            <person name="Tacconi E."/>
            <person name="Takagi T."/>
            <person name="Takahashi H."/>
            <person name="Takemaru K."/>
            <person name="Takeuchi M."/>
            <person name="Tamakoshi A."/>
            <person name="Tanaka T."/>
            <person name="Terpstra P."/>
            <person name="Tognoni A."/>
            <person name="Tosato V."/>
            <person name="Uchiyama S."/>
            <person name="Vandenbol M."/>
            <person name="Vannier F."/>
            <person name="Vassarotti A."/>
            <person name="Viari A."/>
            <person name="Wambutt R."/>
            <person name="Wedler E."/>
            <person name="Wedler H."/>
            <person name="Weitzenegger T."/>
            <person name="Winters P."/>
            <person name="Wipat A."/>
            <person name="Yamamoto H."/>
            <person name="Yamane K."/>
            <person name="Yasumoto K."/>
            <person name="Yata K."/>
            <person name="Yoshida K."/>
            <person name="Yoshikawa H.-F."/>
            <person name="Zumstein E."/>
            <person name="Yoshikawa H."/>
            <person name="Danchin A."/>
        </authorList>
    </citation>
    <scope>NUCLEOTIDE SEQUENCE [LARGE SCALE GENOMIC DNA]</scope>
    <source>
        <strain>168</strain>
    </source>
</reference>
<reference key="4">
    <citation type="journal article" date="2009" name="Microbiology">
        <title>From a consortium sequence to a unified sequence: the Bacillus subtilis 168 reference genome a decade later.</title>
        <authorList>
            <person name="Barbe V."/>
            <person name="Cruveiller S."/>
            <person name="Kunst F."/>
            <person name="Lenoble P."/>
            <person name="Meurice G."/>
            <person name="Sekowska A."/>
            <person name="Vallenet D."/>
            <person name="Wang T."/>
            <person name="Moszer I."/>
            <person name="Medigue C."/>
            <person name="Danchin A."/>
        </authorList>
    </citation>
    <scope>SEQUENCE REVISION TO 329</scope>
</reference>
<accession>P45857</accession>
<organism>
    <name type="scientific">Bacillus subtilis (strain 168)</name>
    <dbReference type="NCBI Taxonomy" id="224308"/>
    <lineage>
        <taxon>Bacteria</taxon>
        <taxon>Bacillati</taxon>
        <taxon>Bacillota</taxon>
        <taxon>Bacilli</taxon>
        <taxon>Bacillales</taxon>
        <taxon>Bacillaceae</taxon>
        <taxon>Bacillus</taxon>
    </lineage>
</organism>
<proteinExistence type="evidence at protein level"/>
<dbReference type="EC" id="1.3.99.-"/>
<dbReference type="EMBL" id="U29084">
    <property type="protein sequence ID" value="AAB09615.1"/>
    <property type="molecule type" value="Genomic_DNA"/>
</dbReference>
<dbReference type="EMBL" id="D84432">
    <property type="protein sequence ID" value="BAA12589.1"/>
    <property type="molecule type" value="Genomic_DNA"/>
</dbReference>
<dbReference type="EMBL" id="AL009126">
    <property type="protein sequence ID" value="CAB14346.2"/>
    <property type="molecule type" value="Genomic_DNA"/>
</dbReference>
<dbReference type="PIR" id="D69658">
    <property type="entry name" value="D69658"/>
</dbReference>
<dbReference type="RefSeq" id="NP_390295.2">
    <property type="nucleotide sequence ID" value="NC_000964.3"/>
</dbReference>
<dbReference type="RefSeq" id="WP_003245999.1">
    <property type="nucleotide sequence ID" value="NZ_OZ025638.1"/>
</dbReference>
<dbReference type="RefSeq" id="WP_009967692.1">
    <property type="nucleotide sequence ID" value="NZ_CM000487.1"/>
</dbReference>
<dbReference type="PDB" id="5LNX">
    <property type="method" value="X-ray"/>
    <property type="resolution" value="2.60 A"/>
    <property type="chains" value="A/B/C/D/E/F/G/H=1-379"/>
</dbReference>
<dbReference type="PDBsum" id="5LNX"/>
<dbReference type="SMR" id="P45857"/>
<dbReference type="FunCoup" id="P45857">
    <property type="interactions" value="479"/>
</dbReference>
<dbReference type="STRING" id="224308.BSU24150"/>
<dbReference type="PaxDb" id="224308-BSU24150"/>
<dbReference type="EnsemblBacteria" id="CAB14346">
    <property type="protein sequence ID" value="CAB14346"/>
    <property type="gene ID" value="BSU_24150"/>
</dbReference>
<dbReference type="GeneID" id="938664"/>
<dbReference type="KEGG" id="bsu:BSU24150"/>
<dbReference type="PATRIC" id="fig|224308.179.peg.2629"/>
<dbReference type="eggNOG" id="COG1960">
    <property type="taxonomic scope" value="Bacteria"/>
</dbReference>
<dbReference type="InParanoid" id="P45857"/>
<dbReference type="OrthoDB" id="9802447at2"/>
<dbReference type="PhylomeDB" id="P45857"/>
<dbReference type="BioCyc" id="BSUB:BSU24150-MONOMER"/>
<dbReference type="Proteomes" id="UP000001570">
    <property type="component" value="Chromosome"/>
</dbReference>
<dbReference type="GO" id="GO:0005737">
    <property type="term" value="C:cytoplasm"/>
    <property type="evidence" value="ECO:0000318"/>
    <property type="project" value="GO_Central"/>
</dbReference>
<dbReference type="GO" id="GO:0003995">
    <property type="term" value="F:acyl-CoA dehydrogenase activity"/>
    <property type="evidence" value="ECO:0000318"/>
    <property type="project" value="GO_Central"/>
</dbReference>
<dbReference type="GO" id="GO:0050660">
    <property type="term" value="F:flavin adenine dinucleotide binding"/>
    <property type="evidence" value="ECO:0007669"/>
    <property type="project" value="InterPro"/>
</dbReference>
<dbReference type="GO" id="GO:0033539">
    <property type="term" value="P:fatty acid beta-oxidation using acyl-CoA dehydrogenase"/>
    <property type="evidence" value="ECO:0000318"/>
    <property type="project" value="GO_Central"/>
</dbReference>
<dbReference type="GO" id="GO:0030435">
    <property type="term" value="P:sporulation resulting in formation of a cellular spore"/>
    <property type="evidence" value="ECO:0007669"/>
    <property type="project" value="UniProtKB-KW"/>
</dbReference>
<dbReference type="CDD" id="cd01158">
    <property type="entry name" value="SCAD_SBCAD"/>
    <property type="match status" value="1"/>
</dbReference>
<dbReference type="FunFam" id="1.10.540.10:FF:000002">
    <property type="entry name" value="Acyl-CoA dehydrogenase FadE19"/>
    <property type="match status" value="1"/>
</dbReference>
<dbReference type="FunFam" id="1.20.140.10:FF:000004">
    <property type="entry name" value="Acyl-CoA dehydrogenase FadE25"/>
    <property type="match status" value="1"/>
</dbReference>
<dbReference type="FunFam" id="2.40.110.10:FF:000001">
    <property type="entry name" value="Acyl-CoA dehydrogenase, mitochondrial"/>
    <property type="match status" value="1"/>
</dbReference>
<dbReference type="Gene3D" id="1.10.540.10">
    <property type="entry name" value="Acyl-CoA dehydrogenase/oxidase, N-terminal domain"/>
    <property type="match status" value="1"/>
</dbReference>
<dbReference type="Gene3D" id="2.40.110.10">
    <property type="entry name" value="Butyryl-CoA Dehydrogenase, subunit A, domain 2"/>
    <property type="match status" value="1"/>
</dbReference>
<dbReference type="Gene3D" id="1.20.140.10">
    <property type="entry name" value="Butyryl-CoA Dehydrogenase, subunit A, domain 3"/>
    <property type="match status" value="1"/>
</dbReference>
<dbReference type="InterPro" id="IPR006089">
    <property type="entry name" value="Acyl-CoA_DH_CS"/>
</dbReference>
<dbReference type="InterPro" id="IPR006091">
    <property type="entry name" value="Acyl-CoA_Oxase/DH_mid-dom"/>
</dbReference>
<dbReference type="InterPro" id="IPR046373">
    <property type="entry name" value="Acyl-CoA_Oxase/DH_mid-dom_sf"/>
</dbReference>
<dbReference type="InterPro" id="IPR036250">
    <property type="entry name" value="AcylCo_DH-like_C"/>
</dbReference>
<dbReference type="InterPro" id="IPR009075">
    <property type="entry name" value="AcylCo_DH/oxidase_C"/>
</dbReference>
<dbReference type="InterPro" id="IPR013786">
    <property type="entry name" value="AcylCoA_DH/ox_N"/>
</dbReference>
<dbReference type="InterPro" id="IPR037069">
    <property type="entry name" value="AcylCoA_DH/ox_N_sf"/>
</dbReference>
<dbReference type="InterPro" id="IPR009100">
    <property type="entry name" value="AcylCoA_DH/oxidase_NM_dom_sf"/>
</dbReference>
<dbReference type="PANTHER" id="PTHR43884">
    <property type="entry name" value="ACYL-COA DEHYDROGENASE"/>
    <property type="match status" value="1"/>
</dbReference>
<dbReference type="PANTHER" id="PTHR43884:SF12">
    <property type="entry name" value="ISOVALERYL-COA DEHYDROGENASE, MITOCHONDRIAL-RELATED"/>
    <property type="match status" value="1"/>
</dbReference>
<dbReference type="Pfam" id="PF00441">
    <property type="entry name" value="Acyl-CoA_dh_1"/>
    <property type="match status" value="1"/>
</dbReference>
<dbReference type="Pfam" id="PF02770">
    <property type="entry name" value="Acyl-CoA_dh_M"/>
    <property type="match status" value="1"/>
</dbReference>
<dbReference type="Pfam" id="PF02771">
    <property type="entry name" value="Acyl-CoA_dh_N"/>
    <property type="match status" value="1"/>
</dbReference>
<dbReference type="PIRSF" id="PIRSF016578">
    <property type="entry name" value="HsaA"/>
    <property type="match status" value="1"/>
</dbReference>
<dbReference type="SUPFAM" id="SSF47203">
    <property type="entry name" value="Acyl-CoA dehydrogenase C-terminal domain-like"/>
    <property type="match status" value="1"/>
</dbReference>
<dbReference type="SUPFAM" id="SSF56645">
    <property type="entry name" value="Acyl-CoA dehydrogenase NM domain-like"/>
    <property type="match status" value="1"/>
</dbReference>
<dbReference type="PROSITE" id="PS00072">
    <property type="entry name" value="ACYL_COA_DH_1"/>
    <property type="match status" value="1"/>
</dbReference>
<dbReference type="PROSITE" id="PS00073">
    <property type="entry name" value="ACYL_COA_DH_2"/>
    <property type="match status" value="1"/>
</dbReference>
<protein>
    <recommendedName>
        <fullName>Acyl-CoA dehydrogenase</fullName>
        <ecNumber>1.3.99.-</ecNumber>
    </recommendedName>
</protein>
<evidence type="ECO:0000250" key="1">
    <source>
        <dbReference type="UniProtKB" id="Q2LQP0"/>
    </source>
</evidence>
<evidence type="ECO:0000269" key="2">
    <source>
    </source>
</evidence>
<evidence type="ECO:0000305" key="3"/>
<evidence type="ECO:0007829" key="4">
    <source>
        <dbReference type="PDB" id="5LNX"/>
    </source>
</evidence>
<comment type="catalytic activity">
    <reaction>
        <text>a 2,3-saturated acyl-CoA + A = a 2,3-dehydroacyl-CoA + AH2</text>
        <dbReference type="Rhea" id="RHEA:48608"/>
        <dbReference type="ChEBI" id="CHEBI:13193"/>
        <dbReference type="ChEBI" id="CHEBI:17499"/>
        <dbReference type="ChEBI" id="CHEBI:60015"/>
        <dbReference type="ChEBI" id="CHEBI:65111"/>
    </reaction>
</comment>
<comment type="cofactor">
    <cofactor evidence="1">
        <name>FAD</name>
        <dbReference type="ChEBI" id="CHEBI:57692"/>
    </cofactor>
</comment>
<comment type="developmental stage">
    <text evidence="2">Expressed in the mother cell at intermediate stages of sporulation under the control of the sigma-E factor.</text>
</comment>
<comment type="induction">
    <text evidence="2">Subject to catabolite repression.</text>
</comment>
<comment type="similarity">
    <text evidence="3">Belongs to the acyl-CoA dehydrogenase family.</text>
</comment>
<gene>
    <name type="primary">mmgC</name>
    <name type="synonym">yqiN</name>
    <name type="ordered locus">BSU24150</name>
</gene>
<keyword id="KW-0002">3D-structure</keyword>
<keyword id="KW-0274">FAD</keyword>
<keyword id="KW-0285">Flavoprotein</keyword>
<keyword id="KW-0560">Oxidoreductase</keyword>
<keyword id="KW-1185">Reference proteome</keyword>
<keyword id="KW-0749">Sporulation</keyword>
<name>ACDB_BACSU</name>
<sequence length="379" mass="40941">MHVTQEQVMMRKMVRDFARKEIAPAAEIMEKTDEFPFQLIKKMGKHGLMGIPVPEQYGGAGADVVSYILAIHEISRISAAVGVILSVHTSVGTNPILYFGNEEQKMKYIPNLASGDHLGAFALTEPHSGSDAGSLRTTAIKKNGKYLLNGSKIFITNGGAADIYITFALTAPDQGRHGISAFIVEKNTPGFTVGKKERKLGLYGSNTTELIFDNAEVPEANLLGKEGDGFHIAMANLNVGRIGIAAQALGIAEAALEHAVDYAKQRVQFGRPIAANQGISFKLADMATRAEAARHLVYHAADLHNRGLNCGKEASMAKQFASDAAVKAALDAVQIYGGYGYMKDYPVERLLRDAKVTQIYEGTNEIQRLIISKYLLGGT</sequence>